<comment type="function">
    <text evidence="2">Transaldolase is important for the balance of metabolites in the pentose-phosphate pathway.</text>
</comment>
<comment type="catalytic activity">
    <reaction evidence="2">
        <text>D-sedoheptulose 7-phosphate + D-glyceraldehyde 3-phosphate = D-erythrose 4-phosphate + beta-D-fructose 6-phosphate</text>
        <dbReference type="Rhea" id="RHEA:17053"/>
        <dbReference type="ChEBI" id="CHEBI:16897"/>
        <dbReference type="ChEBI" id="CHEBI:57483"/>
        <dbReference type="ChEBI" id="CHEBI:57634"/>
        <dbReference type="ChEBI" id="CHEBI:59776"/>
        <dbReference type="EC" id="2.2.1.2"/>
    </reaction>
</comment>
<comment type="pathway">
    <text evidence="2">Carbohydrate degradation; pentose phosphate pathway; D-glyceraldehyde 3-phosphate and beta-D-fructose 6-phosphate from D-ribose 5-phosphate and D-xylulose 5-phosphate (non-oxidative stage): step 2/3.</text>
</comment>
<comment type="subunit">
    <text evidence="1">Homodimer.</text>
</comment>
<comment type="subcellular location">
    <subcellularLocation>
        <location evidence="2">Cytoplasm</location>
    </subcellularLocation>
</comment>
<comment type="similarity">
    <text evidence="2">Belongs to the transaldolase family. Type 1 subfamily.</text>
</comment>
<reference key="1">
    <citation type="submission" date="2007-04" db="EMBL/GenBank/DDBJ databases">
        <title>Complete sequence of Pseudomonas mendocina ymp.</title>
        <authorList>
            <consortium name="US DOE Joint Genome Institute"/>
            <person name="Copeland A."/>
            <person name="Lucas S."/>
            <person name="Lapidus A."/>
            <person name="Barry K."/>
            <person name="Glavina del Rio T."/>
            <person name="Dalin E."/>
            <person name="Tice H."/>
            <person name="Pitluck S."/>
            <person name="Kiss H."/>
            <person name="Brettin T."/>
            <person name="Detter J.C."/>
            <person name="Bruce D."/>
            <person name="Han C."/>
            <person name="Schmutz J."/>
            <person name="Larimer F."/>
            <person name="Land M."/>
            <person name="Hauser L."/>
            <person name="Kyrpides N."/>
            <person name="Mikhailova N."/>
            <person name="Hersman L."/>
            <person name="Dubois J."/>
            <person name="Maurice P."/>
            <person name="Richardson P."/>
        </authorList>
    </citation>
    <scope>NUCLEOTIDE SEQUENCE [LARGE SCALE GENOMIC DNA]</scope>
    <source>
        <strain>ymp</strain>
    </source>
</reference>
<gene>
    <name evidence="2" type="primary">tal</name>
    <name type="ordered locus">Pmen_1931</name>
</gene>
<feature type="chain" id="PRO_1000014514" description="Transaldolase">
    <location>
        <begin position="1"/>
        <end position="308"/>
    </location>
</feature>
<feature type="active site" description="Schiff-base intermediate with substrate" evidence="2">
    <location>
        <position position="125"/>
    </location>
</feature>
<sequence length="308" mass="33279">MTSKLEQLKQFTTVVADTGDLDAIARLKPVDATTNPSLLLKAASLPGYADLLKQAVSTGKGDPGLACDHFAVAVGQEILKVIPGRISTEVDARLSFDTGATLLRAERLIGLYEQAGIGRERVLIKIASTWEGIRAAEQLEKSGVQTNLTLLFSFAQAQACADAGVFLISPFVGRIYDWYKKTEGRDFVGSEDPGVQSVSRIYDYYKANGYDTVVMGASFRNLGQIEALAGCDRLTISPELLQKLAEDEGELSRKLAPGGAGEARQTLDESAFRWALNEDAMATEKLAEGIRLFARDQEKLEALLAAKA</sequence>
<keyword id="KW-0963">Cytoplasm</keyword>
<keyword id="KW-0570">Pentose shunt</keyword>
<keyword id="KW-0704">Schiff base</keyword>
<keyword id="KW-0808">Transferase</keyword>
<proteinExistence type="inferred from homology"/>
<evidence type="ECO:0000250" key="1"/>
<evidence type="ECO:0000255" key="2">
    <source>
        <dbReference type="HAMAP-Rule" id="MF_00492"/>
    </source>
</evidence>
<name>TAL_ECTM1</name>
<dbReference type="EC" id="2.2.1.2" evidence="2"/>
<dbReference type="EMBL" id="CP000680">
    <property type="protein sequence ID" value="ABP84693.1"/>
    <property type="molecule type" value="Genomic_DNA"/>
</dbReference>
<dbReference type="SMR" id="A4XTM7"/>
<dbReference type="STRING" id="399739.Pmen_1931"/>
<dbReference type="KEGG" id="pmy:Pmen_1931"/>
<dbReference type="PATRIC" id="fig|399739.8.peg.1955"/>
<dbReference type="eggNOG" id="COG0176">
    <property type="taxonomic scope" value="Bacteria"/>
</dbReference>
<dbReference type="HOGENOM" id="CLU_047470_0_1_6"/>
<dbReference type="OrthoDB" id="9809101at2"/>
<dbReference type="UniPathway" id="UPA00115">
    <property type="reaction ID" value="UER00414"/>
</dbReference>
<dbReference type="GO" id="GO:0005829">
    <property type="term" value="C:cytosol"/>
    <property type="evidence" value="ECO:0007669"/>
    <property type="project" value="TreeGrafter"/>
</dbReference>
<dbReference type="GO" id="GO:0004801">
    <property type="term" value="F:transaldolase activity"/>
    <property type="evidence" value="ECO:0000250"/>
    <property type="project" value="UniProtKB"/>
</dbReference>
<dbReference type="GO" id="GO:0005975">
    <property type="term" value="P:carbohydrate metabolic process"/>
    <property type="evidence" value="ECO:0007669"/>
    <property type="project" value="InterPro"/>
</dbReference>
<dbReference type="GO" id="GO:0006098">
    <property type="term" value="P:pentose-phosphate shunt"/>
    <property type="evidence" value="ECO:0007669"/>
    <property type="project" value="UniProtKB-UniRule"/>
</dbReference>
<dbReference type="CDD" id="cd00957">
    <property type="entry name" value="Transaldolase_TalAB"/>
    <property type="match status" value="1"/>
</dbReference>
<dbReference type="FunFam" id="3.20.20.70:FF:000002">
    <property type="entry name" value="Transaldolase"/>
    <property type="match status" value="1"/>
</dbReference>
<dbReference type="Gene3D" id="3.20.20.70">
    <property type="entry name" value="Aldolase class I"/>
    <property type="match status" value="1"/>
</dbReference>
<dbReference type="HAMAP" id="MF_00492">
    <property type="entry name" value="Transaldolase_1"/>
    <property type="match status" value="1"/>
</dbReference>
<dbReference type="InterPro" id="IPR013785">
    <property type="entry name" value="Aldolase_TIM"/>
</dbReference>
<dbReference type="InterPro" id="IPR001585">
    <property type="entry name" value="TAL/FSA"/>
</dbReference>
<dbReference type="InterPro" id="IPR004730">
    <property type="entry name" value="Transaldolase_1"/>
</dbReference>
<dbReference type="InterPro" id="IPR018225">
    <property type="entry name" value="Transaldolase_AS"/>
</dbReference>
<dbReference type="NCBIfam" id="NF009001">
    <property type="entry name" value="PRK12346.1"/>
    <property type="match status" value="1"/>
</dbReference>
<dbReference type="NCBIfam" id="TIGR00874">
    <property type="entry name" value="talAB"/>
    <property type="match status" value="1"/>
</dbReference>
<dbReference type="PANTHER" id="PTHR10683">
    <property type="entry name" value="TRANSALDOLASE"/>
    <property type="match status" value="1"/>
</dbReference>
<dbReference type="PANTHER" id="PTHR10683:SF18">
    <property type="entry name" value="TRANSALDOLASE"/>
    <property type="match status" value="1"/>
</dbReference>
<dbReference type="Pfam" id="PF00923">
    <property type="entry name" value="TAL_FSA"/>
    <property type="match status" value="1"/>
</dbReference>
<dbReference type="SUPFAM" id="SSF51569">
    <property type="entry name" value="Aldolase"/>
    <property type="match status" value="1"/>
</dbReference>
<dbReference type="PROSITE" id="PS01054">
    <property type="entry name" value="TRANSALDOLASE_1"/>
    <property type="match status" value="1"/>
</dbReference>
<dbReference type="PROSITE" id="PS00958">
    <property type="entry name" value="TRANSALDOLASE_2"/>
    <property type="match status" value="1"/>
</dbReference>
<protein>
    <recommendedName>
        <fullName evidence="2">Transaldolase</fullName>
        <ecNumber evidence="2">2.2.1.2</ecNumber>
    </recommendedName>
</protein>
<accession>A4XTM7</accession>
<organism>
    <name type="scientific">Ectopseudomonas mendocina (strain ymp)</name>
    <name type="common">Pseudomonas mendocina</name>
    <dbReference type="NCBI Taxonomy" id="399739"/>
    <lineage>
        <taxon>Bacteria</taxon>
        <taxon>Pseudomonadati</taxon>
        <taxon>Pseudomonadota</taxon>
        <taxon>Gammaproteobacteria</taxon>
        <taxon>Pseudomonadales</taxon>
        <taxon>Pseudomonadaceae</taxon>
        <taxon>Ectopseudomonas</taxon>
    </lineage>
</organism>